<feature type="chain" id="PRO_1000136718" description="K(+)/H(+) antiporter NhaP2">
    <location>
        <begin position="1"/>
        <end position="575"/>
    </location>
</feature>
<feature type="transmembrane region" description="Helical" evidence="1">
    <location>
        <begin position="3"/>
        <end position="23"/>
    </location>
</feature>
<feature type="transmembrane region" description="Helical" evidence="1">
    <location>
        <begin position="30"/>
        <end position="50"/>
    </location>
</feature>
<feature type="transmembrane region" description="Helical" evidence="1">
    <location>
        <begin position="58"/>
        <end position="78"/>
    </location>
</feature>
<feature type="transmembrane region" description="Helical" evidence="1">
    <location>
        <begin position="95"/>
        <end position="115"/>
    </location>
</feature>
<feature type="transmembrane region" description="Helical" evidence="1">
    <location>
        <begin position="122"/>
        <end position="142"/>
    </location>
</feature>
<feature type="transmembrane region" description="Helical" evidence="1">
    <location>
        <begin position="172"/>
        <end position="192"/>
    </location>
</feature>
<feature type="transmembrane region" description="Helical" evidence="1">
    <location>
        <begin position="194"/>
        <end position="214"/>
    </location>
</feature>
<feature type="transmembrane region" description="Helical" evidence="1">
    <location>
        <begin position="221"/>
        <end position="241"/>
    </location>
</feature>
<feature type="transmembrane region" description="Helical" evidence="1">
    <location>
        <begin position="244"/>
        <end position="261"/>
    </location>
</feature>
<feature type="transmembrane region" description="Helical" evidence="1">
    <location>
        <begin position="270"/>
        <end position="290"/>
    </location>
</feature>
<feature type="transmembrane region" description="Helical" evidence="1">
    <location>
        <begin position="293"/>
        <end position="313"/>
    </location>
</feature>
<feature type="transmembrane region" description="Helical" evidence="1">
    <location>
        <begin position="334"/>
        <end position="354"/>
    </location>
</feature>
<feature type="transmembrane region" description="Helical" evidence="1">
    <location>
        <begin position="363"/>
        <end position="383"/>
    </location>
</feature>
<feature type="domain" description="RCK C-terminal" evidence="1">
    <location>
        <begin position="403"/>
        <end position="485"/>
    </location>
</feature>
<proteinExistence type="inferred from homology"/>
<comment type="function">
    <text evidence="1">K(+)/H(+) antiporter that extrudes potassium in exchange for external protons and maintains the internal concentration of potassium under toxic levels.</text>
</comment>
<comment type="catalytic activity">
    <reaction evidence="1">
        <text>K(+)(in) + H(+)(out) = K(+)(out) + H(+)(in)</text>
        <dbReference type="Rhea" id="RHEA:29467"/>
        <dbReference type="ChEBI" id="CHEBI:15378"/>
        <dbReference type="ChEBI" id="CHEBI:29103"/>
    </reaction>
    <physiologicalReaction direction="left-to-right" evidence="1">
        <dbReference type="Rhea" id="RHEA:29468"/>
    </physiologicalReaction>
</comment>
<comment type="subcellular location">
    <subcellularLocation>
        <location evidence="1">Cell inner membrane</location>
        <topology evidence="1">Multi-pass membrane protein</topology>
    </subcellularLocation>
</comment>
<comment type="similarity">
    <text evidence="1">Belongs to the monovalent cation:proton antiporter 1 (CPA1) transporter (TC 2.A.36) family. NhaP2 subfamily.</text>
</comment>
<organism>
    <name type="scientific">Yersinia pseudotuberculosis serotype IB (strain PB1/+)</name>
    <dbReference type="NCBI Taxonomy" id="502801"/>
    <lineage>
        <taxon>Bacteria</taxon>
        <taxon>Pseudomonadati</taxon>
        <taxon>Pseudomonadota</taxon>
        <taxon>Gammaproteobacteria</taxon>
        <taxon>Enterobacterales</taxon>
        <taxon>Yersiniaceae</taxon>
        <taxon>Yersinia</taxon>
    </lineage>
</organism>
<reference key="1">
    <citation type="submission" date="2008-04" db="EMBL/GenBank/DDBJ databases">
        <title>Complete sequence of Yersinia pseudotuberculosis PB1/+.</title>
        <authorList>
            <person name="Copeland A."/>
            <person name="Lucas S."/>
            <person name="Lapidus A."/>
            <person name="Glavina del Rio T."/>
            <person name="Dalin E."/>
            <person name="Tice H."/>
            <person name="Bruce D."/>
            <person name="Goodwin L."/>
            <person name="Pitluck S."/>
            <person name="Munk A.C."/>
            <person name="Brettin T."/>
            <person name="Detter J.C."/>
            <person name="Han C."/>
            <person name="Tapia R."/>
            <person name="Schmutz J."/>
            <person name="Larimer F."/>
            <person name="Land M."/>
            <person name="Hauser L."/>
            <person name="Challacombe J.F."/>
            <person name="Green L."/>
            <person name="Lindler L.E."/>
            <person name="Nikolich M.P."/>
            <person name="Richardson P."/>
        </authorList>
    </citation>
    <scope>NUCLEOTIDE SEQUENCE [LARGE SCALE GENOMIC DNA]</scope>
    <source>
        <strain>PB1/+</strain>
    </source>
</reference>
<protein>
    <recommendedName>
        <fullName evidence="1">K(+)/H(+) antiporter NhaP2</fullName>
    </recommendedName>
    <alternativeName>
        <fullName evidence="1">Potassium/proton antiporter NhaP2</fullName>
    </alternativeName>
</protein>
<name>NHAP2_YERPB</name>
<sequence>MDAITINSLFLVGAVLVAASILLSSFSSRLGIPILVIFLAIGMLAGTDGLGGIAFDNYPAAYLVSNLALAVILLDGGMRTRASSFRVALWPALSLATFGVIITAGLTGLVAAWLFNLDIIQGLLIGAIIGSTDAAAVFSLLGGKGLNERVSATLEIESGSNDPMAVFLTVTLIAMIAAGETSLSWMFLVHLIQQFGLGIIIGLLGGGLLLLLINRMELANGLYPLLAVSGGILVFALVTALNGSGILAVYLCGLLLGNRPIRNRAGILQTFDGLAWLSQIGMFLVLGLLLNPSDLLPIAIPALLLSLWMILFARPLSVFIGLLPFRSFNLRERVFISWVGLRGAVPVILAVFPMMAGLPNANLFFNVAFFVVLVSLLLQGTTLSFAARKAKLVVPPTLAPVSRIGLDIDMNNQWEQFIYQLSCDKWCIGATLRDLKMPQGTRIAALFRGKDLLHPTGSTRLKEGDILCVIGQEHDLPALGKLFSQSPNIQLDERFFGDFILDADAKLQDISQIYGLNLEPTVDKQQTLGQFVLYLFGGEPVIGDQIEWDGLTWTIAEMESDRVSRVGVKIVTDKA</sequence>
<keyword id="KW-0050">Antiport</keyword>
<keyword id="KW-0997">Cell inner membrane</keyword>
<keyword id="KW-1003">Cell membrane</keyword>
<keyword id="KW-0406">Ion transport</keyword>
<keyword id="KW-0472">Membrane</keyword>
<keyword id="KW-0630">Potassium</keyword>
<keyword id="KW-0633">Potassium transport</keyword>
<keyword id="KW-0812">Transmembrane</keyword>
<keyword id="KW-1133">Transmembrane helix</keyword>
<keyword id="KW-0813">Transport</keyword>
<gene>
    <name evidence="1" type="primary">nhaP2</name>
    <name type="synonym">cvrA</name>
    <name type="ordered locus">YPTS_2590</name>
</gene>
<evidence type="ECO:0000255" key="1">
    <source>
        <dbReference type="HAMAP-Rule" id="MF_01075"/>
    </source>
</evidence>
<accession>B2K787</accession>
<dbReference type="EMBL" id="CP001048">
    <property type="protein sequence ID" value="ACC89550.1"/>
    <property type="molecule type" value="Genomic_DNA"/>
</dbReference>
<dbReference type="RefSeq" id="WP_012413788.1">
    <property type="nucleotide sequence ID" value="NZ_CP009780.1"/>
</dbReference>
<dbReference type="SMR" id="B2K787"/>
<dbReference type="KEGG" id="ypb:YPTS_2590"/>
<dbReference type="PATRIC" id="fig|502801.10.peg.2001"/>
<dbReference type="GO" id="GO:0005886">
    <property type="term" value="C:plasma membrane"/>
    <property type="evidence" value="ECO:0007669"/>
    <property type="project" value="UniProtKB-SubCell"/>
</dbReference>
<dbReference type="GO" id="GO:0050660">
    <property type="term" value="F:flavin adenine dinucleotide binding"/>
    <property type="evidence" value="ECO:0007669"/>
    <property type="project" value="InterPro"/>
</dbReference>
<dbReference type="GO" id="GO:0015386">
    <property type="term" value="F:potassium:proton antiporter activity"/>
    <property type="evidence" value="ECO:0007669"/>
    <property type="project" value="UniProtKB-UniRule"/>
</dbReference>
<dbReference type="GO" id="GO:0006884">
    <property type="term" value="P:cell volume homeostasis"/>
    <property type="evidence" value="ECO:0007669"/>
    <property type="project" value="InterPro"/>
</dbReference>
<dbReference type="Gene3D" id="1.20.1530.20">
    <property type="match status" value="1"/>
</dbReference>
<dbReference type="Gene3D" id="3.30.465.10">
    <property type="match status" value="1"/>
</dbReference>
<dbReference type="Gene3D" id="3.30.70.1450">
    <property type="entry name" value="Regulator of K+ conductance, C-terminal domain"/>
    <property type="match status" value="1"/>
</dbReference>
<dbReference type="HAMAP" id="MF_01075">
    <property type="entry name" value="NhaP2"/>
    <property type="match status" value="1"/>
</dbReference>
<dbReference type="InterPro" id="IPR006153">
    <property type="entry name" value="Cation/H_exchanger_TM"/>
</dbReference>
<dbReference type="InterPro" id="IPR036318">
    <property type="entry name" value="FAD-bd_PCMH-like_sf"/>
</dbReference>
<dbReference type="InterPro" id="IPR016169">
    <property type="entry name" value="FAD-bd_PCMH_sub2"/>
</dbReference>
<dbReference type="InterPro" id="IPR038770">
    <property type="entry name" value="Na+/solute_symporter_sf"/>
</dbReference>
<dbReference type="InterPro" id="IPR023729">
    <property type="entry name" value="NhaP2"/>
</dbReference>
<dbReference type="InterPro" id="IPR006037">
    <property type="entry name" value="RCK_C"/>
</dbReference>
<dbReference type="InterPro" id="IPR036721">
    <property type="entry name" value="RCK_C_sf"/>
</dbReference>
<dbReference type="InterPro" id="IPR005170">
    <property type="entry name" value="Transptr-assoc_dom"/>
</dbReference>
<dbReference type="NCBIfam" id="NF003714">
    <property type="entry name" value="PRK05326.1-1"/>
    <property type="match status" value="1"/>
</dbReference>
<dbReference type="NCBIfam" id="NF003715">
    <property type="entry name" value="PRK05326.1-2"/>
    <property type="match status" value="1"/>
</dbReference>
<dbReference type="NCBIfam" id="NF003716">
    <property type="entry name" value="PRK05326.1-3"/>
    <property type="match status" value="1"/>
</dbReference>
<dbReference type="PANTHER" id="PTHR32507:SF7">
    <property type="entry name" value="K(+)_H(+) ANTIPORTER NHAP2"/>
    <property type="match status" value="1"/>
</dbReference>
<dbReference type="PANTHER" id="PTHR32507">
    <property type="entry name" value="NA(+)/H(+) ANTIPORTER 1"/>
    <property type="match status" value="1"/>
</dbReference>
<dbReference type="Pfam" id="PF03471">
    <property type="entry name" value="CorC_HlyC"/>
    <property type="match status" value="1"/>
</dbReference>
<dbReference type="Pfam" id="PF00999">
    <property type="entry name" value="Na_H_Exchanger"/>
    <property type="match status" value="1"/>
</dbReference>
<dbReference type="Pfam" id="PF02080">
    <property type="entry name" value="TrkA_C"/>
    <property type="match status" value="1"/>
</dbReference>
<dbReference type="SMART" id="SM01091">
    <property type="entry name" value="CorC_HlyC"/>
    <property type="match status" value="1"/>
</dbReference>
<dbReference type="SUPFAM" id="SSF56176">
    <property type="entry name" value="FAD-binding/transporter-associated domain-like"/>
    <property type="match status" value="1"/>
</dbReference>
<dbReference type="SUPFAM" id="SSF116726">
    <property type="entry name" value="TrkA C-terminal domain-like"/>
    <property type="match status" value="1"/>
</dbReference>
<dbReference type="PROSITE" id="PS51202">
    <property type="entry name" value="RCK_C"/>
    <property type="match status" value="1"/>
</dbReference>